<name>SMS2_MYOSC</name>
<dbReference type="PIR" id="S00166">
    <property type="entry name" value="S00166"/>
</dbReference>
<dbReference type="GO" id="GO:0005615">
    <property type="term" value="C:extracellular space"/>
    <property type="evidence" value="ECO:0007669"/>
    <property type="project" value="TreeGrafter"/>
</dbReference>
<dbReference type="GO" id="GO:0005179">
    <property type="term" value="F:hormone activity"/>
    <property type="evidence" value="ECO:0007669"/>
    <property type="project" value="UniProtKB-KW"/>
</dbReference>
<dbReference type="GO" id="GO:0030334">
    <property type="term" value="P:regulation of cell migration"/>
    <property type="evidence" value="ECO:0007669"/>
    <property type="project" value="TreeGrafter"/>
</dbReference>
<dbReference type="InterPro" id="IPR004250">
    <property type="entry name" value="Somatostatin"/>
</dbReference>
<dbReference type="InterPro" id="IPR018142">
    <property type="entry name" value="Somatostatin/Cortistatin_C"/>
</dbReference>
<dbReference type="PANTHER" id="PTHR10558">
    <property type="entry name" value="SOMATOSTATIN"/>
    <property type="match status" value="1"/>
</dbReference>
<dbReference type="PANTHER" id="PTHR10558:SF6">
    <property type="entry name" value="SOMATOSTATIN 1, TANDEM DUPLICATE 2"/>
    <property type="match status" value="1"/>
</dbReference>
<dbReference type="Pfam" id="PF03002">
    <property type="entry name" value="Somatostatin"/>
    <property type="match status" value="1"/>
</dbReference>
<comment type="function">
    <text>Somatostatin inhibits the release of somatotropin.</text>
</comment>
<comment type="subcellular location">
    <subcellularLocation>
        <location>Secreted</location>
    </subcellularLocation>
</comment>
<comment type="similarity">
    <text evidence="2">Belongs to the somatostatin family.</text>
</comment>
<feature type="propeptide" id="PRO_0000045871" evidence="1">
    <location>
        <begin position="1" status="less than"/>
        <end position="46"/>
    </location>
</feature>
<feature type="peptide" id="PRO_0000033135" description="[Tyr21,Gly24]-somatostatin-28">
    <location>
        <begin position="47"/>
        <end position="74"/>
    </location>
</feature>
<feature type="peptide" id="PRO_0000033136" description="[Tyr7,Gly10]-somatostatin-14">
    <location>
        <begin position="61"/>
        <end position="74"/>
    </location>
</feature>
<feature type="disulfide bond" evidence="1">
    <location>
        <begin position="63"/>
        <end position="74"/>
    </location>
</feature>
<feature type="non-consecutive residues" evidence="2">
    <location>
        <begin position="12"/>
        <end position="13"/>
    </location>
</feature>
<feature type="non-consecutive residues" evidence="2">
    <location>
        <begin position="46"/>
        <end position="47"/>
    </location>
</feature>
<feature type="non-terminal residue">
    <location>
        <position position="1"/>
    </location>
</feature>
<sequence length="74" mass="8036">ARGAGLLSQDWSAVEDLLAQMSLPEADAQREAEVVSVATGGRLNLESVDPPNNIPLRERKAGCKNFYWKGFTSC</sequence>
<reference key="1">
    <citation type="journal article" date="1987" name="Eur. J. Biochem.">
        <title>Structural characterization of peptides derived from prosomatostatins I and II isolated from the pancreatic islets of two species of teleostean fish: the daddy sculpin and the flounder.</title>
        <authorList>
            <person name="Conlon J.M."/>
            <person name="Davis M.S."/>
            <person name="Falkmer S."/>
            <person name="Thim L."/>
        </authorList>
    </citation>
    <scope>PROTEIN SEQUENCE</scope>
    <source>
        <tissue>Pancreas</tissue>
    </source>
</reference>
<reference key="2">
    <citation type="journal article" date="1987" name="FEBS Lett.">
        <title>The amino-acid sequences of sculpin islet somatostatin-28 and peptide YY.</title>
        <authorList>
            <person name="Cutfield S.M."/>
            <person name="Carne A."/>
            <person name="Cutfield J.F."/>
        </authorList>
    </citation>
    <scope>PROTEIN SEQUENCE OF 47-74</scope>
    <source>
        <tissue>Pancreas</tissue>
    </source>
</reference>
<evidence type="ECO:0000269" key="1">
    <source>
    </source>
</evidence>
<evidence type="ECO:0000305" key="2"/>
<protein>
    <recommendedName>
        <fullName>Somatostatin-2</fullName>
    </recommendedName>
    <alternativeName>
        <fullName>Somatostatin II</fullName>
    </alternativeName>
    <component>
        <recommendedName>
            <fullName>[Tyr21,Gly24]-somatostatin-28</fullName>
        </recommendedName>
    </component>
    <component>
        <recommendedName>
            <fullName>[Tyr7,Gly10]-somatostatin-14</fullName>
        </recommendedName>
    </component>
</protein>
<proteinExistence type="evidence at protein level"/>
<gene>
    <name type="primary">sst2</name>
</gene>
<accession>P09876</accession>
<keyword id="KW-0165">Cleavage on pair of basic residues</keyword>
<keyword id="KW-0903">Direct protein sequencing</keyword>
<keyword id="KW-1015">Disulfide bond</keyword>
<keyword id="KW-0372">Hormone</keyword>
<keyword id="KW-0964">Secreted</keyword>
<organism>
    <name type="scientific">Myoxocephalus scorpius</name>
    <name type="common">Shorthorn sculpin</name>
    <name type="synonym">Cottus scorpius</name>
    <dbReference type="NCBI Taxonomy" id="8097"/>
    <lineage>
        <taxon>Eukaryota</taxon>
        <taxon>Metazoa</taxon>
        <taxon>Chordata</taxon>
        <taxon>Craniata</taxon>
        <taxon>Vertebrata</taxon>
        <taxon>Euteleostomi</taxon>
        <taxon>Actinopterygii</taxon>
        <taxon>Neopterygii</taxon>
        <taxon>Teleostei</taxon>
        <taxon>Neoteleostei</taxon>
        <taxon>Acanthomorphata</taxon>
        <taxon>Eupercaria</taxon>
        <taxon>Perciformes</taxon>
        <taxon>Cottioidei</taxon>
        <taxon>Cottales</taxon>
        <taxon>Cottidae</taxon>
        <taxon>Myoxocephalus</taxon>
    </lineage>
</organism>